<protein>
    <recommendedName>
        <fullName>Histone H4</fullName>
    </recommendedName>
    <alternativeName>
        <fullName>H4.1</fullName>
    </alternativeName>
</protein>
<name>H4_BOVIN</name>
<organism>
    <name type="scientific">Bos taurus</name>
    <name type="common">Bovine</name>
    <dbReference type="NCBI Taxonomy" id="9913"/>
    <lineage>
        <taxon>Eukaryota</taxon>
        <taxon>Metazoa</taxon>
        <taxon>Chordata</taxon>
        <taxon>Craniata</taxon>
        <taxon>Vertebrata</taxon>
        <taxon>Euteleostomi</taxon>
        <taxon>Mammalia</taxon>
        <taxon>Eutheria</taxon>
        <taxon>Laurasiatheria</taxon>
        <taxon>Artiodactyla</taxon>
        <taxon>Ruminantia</taxon>
        <taxon>Pecora</taxon>
        <taxon>Bovidae</taxon>
        <taxon>Bovinae</taxon>
        <taxon>Bos</taxon>
    </lineage>
</organism>
<keyword id="KW-0007">Acetylation</keyword>
<keyword id="KW-0158">Chromosome</keyword>
<keyword id="KW-0164">Citrullination</keyword>
<keyword id="KW-0903">Direct protein sequencing</keyword>
<keyword id="KW-0238">DNA-binding</keyword>
<keyword id="KW-0379">Hydroxylation</keyword>
<keyword id="KW-1017">Isopeptide bond</keyword>
<keyword id="KW-0488">Methylation</keyword>
<keyword id="KW-0544">Nucleosome core</keyword>
<keyword id="KW-0539">Nucleus</keyword>
<keyword id="KW-0597">Phosphoprotein</keyword>
<keyword id="KW-1185">Reference proteome</keyword>
<keyword id="KW-0832">Ubl conjugation</keyword>
<comment type="function">
    <text>Core component of nucleosome. Nucleosomes wrap and compact DNA into chromatin, limiting DNA accessibility to the cellular machineries which require DNA as a template. Histones thereby play a central role in transcription regulation, DNA repair, DNA replication and chromosomal stability. DNA accessibility is regulated via a complex set of post-translational modifications of histones, also called histone code, and nucleosome remodeling.</text>
</comment>
<comment type="subunit">
    <text evidence="2 3">The nucleosome is a histone octamer containing two molecules each of H2A, H2B, H3 and H4 assembled in one H3-H4 heterotetramer and two H2A-H2B heterodimers. The octamer wraps approximately 147 bp of DNA (By similarity). Found in a co-chaperone complex with DNJC9, MCM2 and histone H3.3-H4 dimers (By similarity). Within the complex, interacts with DNJC9 (via C-terminus); the interaction is direct (By similarity). Interacts with NASP; NASP is a histone chaperone that stabilizes and maintains a soluble pool of Histone H3-H4 dimers (By similarity).</text>
</comment>
<comment type="subcellular location">
    <subcellularLocation>
        <location evidence="3">Nucleus</location>
    </subcellularLocation>
    <subcellularLocation>
        <location>Chromosome</location>
    </subcellularLocation>
    <text evidence="3">Localized to the nucleus when acetylated in step 11 spermatids.</text>
</comment>
<comment type="PTM">
    <text evidence="2 3">Acetylation at Lys-6 (H4K5ac), Lys-9 (H4K8ac), Lys-13 (H4K12ac) and Lys-17 (H4K16ac) occurs in coding regions of the genome but not in heterochromatin. Acetylated as part of spermatogenesis progression prior to histone-to-protamine exchange (By similarity).</text>
</comment>
<comment type="PTM">
    <text evidence="2">Citrullination at Arg-4 (H4R3ci) by PADI4 impairs methylation.</text>
</comment>
<comment type="PTM">
    <text evidence="2">Monomethylation and asymmetric dimethylation at Arg-4 (H4R3me1 and H4R3me2a, respectively) by PRMT1 favors acetylation at Lys-9 (H4K8ac) and Lys-13 (H4K12ac). Demethylation is performed by JMJD6 (By similarity). Symmetric dimethylation on Arg-4 (H4R3me2s) by the PRDM1/PRMT5 complex may play a crucial role in the germ-cell lineage (By similarity).</text>
</comment>
<comment type="PTM">
    <text evidence="2">Monomethylated, dimethylated or trimethylated at Lys-21 (H4K20me1, H4K20me2, H4K20me3). Monomethylation is performed by KMT5A/SET8. Trimethylation is performed by KMT5B and KMT5C and induces gene silencing. Monomethylated at Lys-13 (H4K12me1) by N6AMT1; H4K12me1 modification is present at the promoters of numerous genes encoding cell cycle regulators.</text>
</comment>
<comment type="PTM">
    <text evidence="2">Acetyl-methylated at Lys-6 and Lys-13 (H4K5acme and H4K12acme, respectively), acetyl-methylation is an epigenetic mark of active chromatin associated with increased transcriptional initiation. Acetyl-methylation is formed by acetylation by EP300/p300 of lysine residues that are already monomethylated on the same side chain. H4K5acme and H4K12acme marks specifically bind BRD2.</text>
</comment>
<comment type="PTM">
    <text evidence="2">Phosphorylated by PAK2 at Ser-48 (H4S47ph). This phosphorylation increases the association of H3.3-H4 with the histone chaperone HIRA, thus promoting nucleosome assembly of H3.3-H4 and inhibiting nucleosome assembly of H3.1-H4 (By similarity).</text>
</comment>
<comment type="PTM">
    <text evidence="2 3">Ubiquitinated by the CUL4-DDB-RBX1 complex in response to ultraviolet irradiation. This may weaken the interaction between histones and DNA and facilitate DNA accessibility to repair proteins. Monoubiquitinated at Lys-92 of histone H4 (H4K91ub1) in response to DNA damage. The exact role of H4K91ub1 in DNA damage response is still unclear but it may function as a licensing signal for additional histone H4 post-translational modifications such as H4 Lys-21 methylation (H4K20me) (By similarity). Ubiquitinated; by PHF7 (By similarity).</text>
</comment>
<comment type="PTM">
    <text evidence="2">Sumoylated, which is associated with transcriptional repression.</text>
</comment>
<comment type="PTM">
    <text evidence="2">Crotonylation (Kcr) is specifically present in male germ cells and marks testis-specific genes in post-meiotic cells, including X-linked genes that escape sex chromosome inactivation in haploid cells. Crotonylation marks active promoters and enhancers and confers resistance to transcriptional repressors. It is also associated with post-meiotically activated genes on autosomes (By similarity).</text>
</comment>
<comment type="PTM">
    <text evidence="3">Butyrylation of histones marks active promoters and competes with histone acetylation.</text>
</comment>
<comment type="PTM">
    <text evidence="2">Glutarylation at Lys-92 (H4K91glu) destabilizes nucleosomes by promoting dissociation of the H2A-H2B dimers from nucleosomes.</text>
</comment>
<comment type="PTM">
    <text evidence="2">Ufmylated; monofmylated by UFL1 at Lys-32 (H4K31Ufm1) in response to DNA damage.</text>
</comment>
<comment type="PTM">
    <text evidence="2">Lactylated in macrophages by EP300/P300 by using lactoyl-CoA directly derived from endogenous or exogenous lactate, leading to stimulates gene transcription. Delactylated by SIRT3 at Lys-17 (H4K16la).</text>
</comment>
<comment type="similarity">
    <text evidence="7">Belongs to the histone H4 family.</text>
</comment>
<reference key="1">
    <citation type="journal article" date="1998" name="Biochim. Biophys. Acta">
        <title>Poly A-containing histone H4 mRNA variant (H4-v.1): isolation and sequence determination from bovine adrenal medulla.</title>
        <authorList>
            <person name="Gendron N."/>
            <person name="Dumont M."/>
            <person name="Gagne M.-F."/>
            <person name="Lemaire S."/>
        </authorList>
    </citation>
    <scope>NUCLEOTIDE SEQUENCE [MRNA] (H4-V.1)</scope>
    <source>
        <tissue>Adrenal medulla</tissue>
    </source>
</reference>
<reference key="2">
    <citation type="submission" date="2007-06" db="EMBL/GenBank/DDBJ databases">
        <authorList>
            <consortium name="NIH - Mammalian Gene Collection (MGC) project"/>
        </authorList>
    </citation>
    <scope>NUCLEOTIDE SEQUENCE [LARGE SCALE MRNA]</scope>
    <source>
        <strain>Crossbred X Angus</strain>
        <strain>Hereford</strain>
        <tissue>Hypothalamus</tissue>
        <tissue>Ileum</tissue>
        <tissue>Thymus</tissue>
    </source>
</reference>
<reference key="3">
    <citation type="journal article" date="1970" name="Cancer Res.">
        <title>Structure of the glycine-rich, arginine-rich histone of the Novikoff hepatoma.</title>
        <authorList>
            <person name="Wilson R.K."/>
            <person name="Starbuck W.C."/>
            <person name="Taylor C.W."/>
            <person name="Jordan J.J."/>
            <person name="Busch H."/>
        </authorList>
    </citation>
    <scope>PROTEIN SEQUENCE OF 2-103</scope>
    <scope>ACETYLATION AT SER-2 AND LYS-17</scope>
    <scope>METHYLATION AT LYS-21</scope>
</reference>
<reference key="4">
    <citation type="journal article" date="1969" name="J. Biol. Chem.">
        <title>Structural analysis of the glycine-rich, arginine-rich histone. 3. Sequence of the amino-terminal half of the molecule containing the modified lysine residues and the total sequence.</title>
        <authorList>
            <person name="Ogawa Y."/>
            <person name="Quagliarotti G."/>
            <person name="Jordan J.J."/>
            <person name="Taylor C.W."/>
            <person name="Starbuck W.C."/>
            <person name="Busch H."/>
        </authorList>
    </citation>
    <scope>PROTEIN SEQUENCE OF 2-50</scope>
    <source>
        <tissue>Thymus</tissue>
    </source>
</reference>
<reference key="5">
    <citation type="journal article" date="1969" name="J. Biol. Chem.">
        <title>Structural analysis of the glycine-rich, arginine-rich histone. II. Sequence of the half of the molecule containing the aromatic amino acids.</title>
        <authorList>
            <person name="Quagliarotti G."/>
            <person name="Ogawa Y."/>
            <person name="Taylor C.W."/>
            <person name="Sautiere P."/>
            <person name="Jordan J."/>
            <person name="Starbuck W.C."/>
            <person name="Busch H."/>
        </authorList>
    </citation>
    <scope>PROTEIN SEQUENCE OF 51-103</scope>
    <source>
        <tissue>Thymus</tissue>
    </source>
</reference>
<proteinExistence type="evidence at protein level"/>
<evidence type="ECO:0000250" key="1"/>
<evidence type="ECO:0000250" key="2">
    <source>
        <dbReference type="UniProtKB" id="P62805"/>
    </source>
</evidence>
<evidence type="ECO:0000250" key="3">
    <source>
        <dbReference type="UniProtKB" id="P62806"/>
    </source>
</evidence>
<evidence type="ECO:0000256" key="4">
    <source>
        <dbReference type="SAM" id="MobiDB-lite"/>
    </source>
</evidence>
<evidence type="ECO:0000269" key="5">
    <source>
    </source>
</evidence>
<evidence type="ECO:0000269" key="6">
    <source>
    </source>
</evidence>
<evidence type="ECO:0000305" key="7"/>
<dbReference type="EMBL" id="AF001288">
    <property type="protein sequence ID" value="AAC39176.1"/>
    <property type="molecule type" value="mRNA"/>
</dbReference>
<dbReference type="EMBL" id="BC114196">
    <property type="protein sequence ID" value="AAI14197.1"/>
    <property type="molecule type" value="mRNA"/>
</dbReference>
<dbReference type="EMBL" id="BC141999">
    <property type="protein sequence ID" value="AAI42000.1"/>
    <property type="molecule type" value="mRNA"/>
</dbReference>
<dbReference type="EMBL" id="BC142359">
    <property type="protein sequence ID" value="AAI42360.1"/>
    <property type="molecule type" value="mRNA"/>
</dbReference>
<dbReference type="PIR" id="A92050">
    <property type="entry name" value="HSBO4"/>
</dbReference>
<dbReference type="RefSeq" id="NP_001093194.1">
    <property type="nucleotide sequence ID" value="NM_001099724.2"/>
</dbReference>
<dbReference type="RefSeq" id="NP_001139343.1">
    <property type="nucleotide sequence ID" value="NM_001145871.2"/>
</dbReference>
<dbReference type="RefSeq" id="NP_001361457.1">
    <property type="nucleotide sequence ID" value="NM_001374528.1"/>
</dbReference>
<dbReference type="RefSeq" id="NP_001361460.1">
    <property type="nucleotide sequence ID" value="NM_001374531.1"/>
</dbReference>
<dbReference type="RefSeq" id="NP_001361461.1">
    <property type="nucleotide sequence ID" value="NM_001374532.1"/>
</dbReference>
<dbReference type="RefSeq" id="NP_001361463.1">
    <property type="nucleotide sequence ID" value="NM_001374534.1"/>
</dbReference>
<dbReference type="RefSeq" id="NP_001361464.1">
    <property type="nucleotide sequence ID" value="NM_001374535.1"/>
</dbReference>
<dbReference type="RefSeq" id="NP_001361466.1">
    <property type="nucleotide sequence ID" value="NM_001374537.1"/>
</dbReference>
<dbReference type="RefSeq" id="NP_001361467.1">
    <property type="nucleotide sequence ID" value="NM_001374538.1"/>
</dbReference>
<dbReference type="RefSeq" id="NP_001361469.1">
    <property type="nucleotide sequence ID" value="NM_001374540.1"/>
</dbReference>
<dbReference type="RefSeq" id="NP_001361470.1">
    <property type="nucleotide sequence ID" value="NM_001374541.1"/>
</dbReference>
<dbReference type="RefSeq" id="NP_776305.1">
    <property type="nucleotide sequence ID" value="NM_173880.2"/>
</dbReference>
<dbReference type="RefSeq" id="XP_002684676.1">
    <property type="nucleotide sequence ID" value="XM_002684630.3"/>
</dbReference>
<dbReference type="RefSeq" id="XP_002697516.1">
    <property type="nucleotide sequence ID" value="XM_002697470.6"/>
</dbReference>
<dbReference type="RefSeq" id="XP_059736719.1">
    <property type="nucleotide sequence ID" value="XM_059880736.1"/>
</dbReference>
<dbReference type="RefSeq" id="XP_605163.2">
    <property type="nucleotide sequence ID" value="XM_605163.4"/>
</dbReference>
<dbReference type="RefSeq" id="XP_874074.1">
    <property type="nucleotide sequence ID" value="XM_868981.6"/>
</dbReference>
<dbReference type="SMR" id="P62803"/>
<dbReference type="BioGRID" id="158101">
    <property type="interactions" value="10"/>
</dbReference>
<dbReference type="DIP" id="DIP-44668N"/>
<dbReference type="FunCoup" id="P62803">
    <property type="interactions" value="1616"/>
</dbReference>
<dbReference type="IntAct" id="P62803">
    <property type="interactions" value="3"/>
</dbReference>
<dbReference type="MINT" id="P62803"/>
<dbReference type="STRING" id="9913.ENSBTAP00000047761"/>
<dbReference type="iPTMnet" id="P62803"/>
<dbReference type="PaxDb" id="9913-ENSBTAP00000029245"/>
<dbReference type="PeptideAtlas" id="P62803"/>
<dbReference type="Ensembl" id="ENSBTAT00000029245.6">
    <property type="protein sequence ID" value="ENSBTAP00000029245.6"/>
    <property type="gene ID" value="ENSBTAG00000030504.4"/>
</dbReference>
<dbReference type="Ensembl" id="ENSBTAT00000054510.2">
    <property type="protein sequence ID" value="ENSBTAP00000052235.1"/>
    <property type="gene ID" value="ENSBTAG00000067836.1"/>
</dbReference>
<dbReference type="Ensembl" id="ENSBTAT00000056505.2">
    <property type="protein sequence ID" value="ENSBTAP00000053034.1"/>
    <property type="gene ID" value="ENSBTAG00000068489.1"/>
</dbReference>
<dbReference type="Ensembl" id="ENSBTAT00000063932.3">
    <property type="protein sequence ID" value="ENSBTAP00000054635.3"/>
    <property type="gene ID" value="ENSBTAG00000032453.4"/>
</dbReference>
<dbReference type="Ensembl" id="ENSBTAT00000101086.1">
    <property type="protein sequence ID" value="ENSBTAP00000084203.1"/>
    <property type="gene ID" value="ENSBTAG00000060235.1"/>
</dbReference>
<dbReference type="Ensembl" id="ENSBTAT00000111055.1">
    <property type="protein sequence ID" value="ENSBTAP00000087285.1"/>
    <property type="gene ID" value="ENSBTAG00000060177.1"/>
</dbReference>
<dbReference type="GeneID" id="115945166"/>
<dbReference type="GeneID" id="115945168"/>
<dbReference type="GeneID" id="115945170"/>
<dbReference type="GeneID" id="115945172"/>
<dbReference type="GeneID" id="280691"/>
<dbReference type="GeneID" id="516742"/>
<dbReference type="GeneID" id="518961"/>
<dbReference type="GeneID" id="526789"/>
<dbReference type="GeneID" id="527388"/>
<dbReference type="GeneID" id="527645"/>
<dbReference type="GeneID" id="528329"/>
<dbReference type="GeneID" id="530773"/>
<dbReference type="GeneID" id="617875"/>
<dbReference type="GeneID" id="617905"/>
<dbReference type="KEGG" id="bta:526789"/>
<dbReference type="KEGG" id="bta:527645"/>
<dbReference type="KEGG" id="bta:530773"/>
<dbReference type="KEGG" id="bta:617875"/>
<dbReference type="CTD" id="121504"/>
<dbReference type="CTD" id="8360"/>
<dbReference type="CTD" id="8363"/>
<dbReference type="CTD" id="8366"/>
<dbReference type="VEuPathDB" id="HostDB:ENSBTAG00000040277"/>
<dbReference type="VEuPathDB" id="HostDB:ENSBTAG00000052332"/>
<dbReference type="VEuPathDB" id="HostDB:ENSBTAG00000052349"/>
<dbReference type="VEuPathDB" id="HostDB:ENSBTAG00000052609"/>
<dbReference type="VEuPathDB" id="HostDB:ENSBTAG00000053034"/>
<dbReference type="VGNC" id="VGNC:83597">
    <property type="gene designation" value="H4C14"/>
</dbReference>
<dbReference type="VGNC" id="VGNC:83618">
    <property type="gene designation" value="H4C16"/>
</dbReference>
<dbReference type="eggNOG" id="KOG3467">
    <property type="taxonomic scope" value="Eukaryota"/>
</dbReference>
<dbReference type="GeneTree" id="ENSGT01060000248528"/>
<dbReference type="HOGENOM" id="CLU_109117_2_3_1"/>
<dbReference type="InParanoid" id="P62803"/>
<dbReference type="OMA" id="TSSRHCY"/>
<dbReference type="OrthoDB" id="9789421at2759"/>
<dbReference type="Reactome" id="R-BTA-110330">
    <property type="pathway name" value="Recognition and association of DNA glycosylase with site containing an affected purine"/>
</dbReference>
<dbReference type="Reactome" id="R-BTA-110331">
    <property type="pathway name" value="Cleavage of the damaged purine"/>
</dbReference>
<dbReference type="Reactome" id="R-BTA-171306">
    <property type="pathway name" value="Packaging Of Telomere Ends"/>
</dbReference>
<dbReference type="Reactome" id="R-BTA-201722">
    <property type="pathway name" value="Formation of the beta-catenin:TCF transactivating complex"/>
</dbReference>
<dbReference type="Reactome" id="R-BTA-212300">
    <property type="pathway name" value="PRC2 methylates histones and DNA"/>
</dbReference>
<dbReference type="Reactome" id="R-BTA-2299718">
    <property type="pathway name" value="Condensation of Prophase Chromosomes"/>
</dbReference>
<dbReference type="Reactome" id="R-BTA-2559580">
    <property type="pathway name" value="Oxidative Stress Induced Senescence"/>
</dbReference>
<dbReference type="Reactome" id="R-BTA-2559582">
    <property type="pathway name" value="Senescence-Associated Secretory Phenotype (SASP)"/>
</dbReference>
<dbReference type="Reactome" id="R-BTA-2559586">
    <property type="pathway name" value="DNA Damage/Telomere Stress Induced Senescence"/>
</dbReference>
<dbReference type="Reactome" id="R-BTA-3214815">
    <property type="pathway name" value="HDACs deacetylate histones"/>
</dbReference>
<dbReference type="Reactome" id="R-BTA-3214841">
    <property type="pathway name" value="PKMTs methylate histone lysines"/>
</dbReference>
<dbReference type="Reactome" id="R-BTA-3214842">
    <property type="pathway name" value="HDMs demethylate histones"/>
</dbReference>
<dbReference type="Reactome" id="R-BTA-3214847">
    <property type="pathway name" value="HATs acetylate histones"/>
</dbReference>
<dbReference type="Reactome" id="R-BTA-3214858">
    <property type="pathway name" value="RMTs methylate histone arginines"/>
</dbReference>
<dbReference type="Reactome" id="R-BTA-427359">
    <property type="pathway name" value="SIRT1 negatively regulates rRNA expression"/>
</dbReference>
<dbReference type="Reactome" id="R-BTA-427413">
    <property type="pathway name" value="NoRC negatively regulates rRNA expression"/>
</dbReference>
<dbReference type="Reactome" id="R-BTA-4551638">
    <property type="pathway name" value="SUMOylation of chromatin organization proteins"/>
</dbReference>
<dbReference type="Reactome" id="R-BTA-5250924">
    <property type="pathway name" value="B-WICH complex positively regulates rRNA expression"/>
</dbReference>
<dbReference type="Reactome" id="R-BTA-5578749">
    <property type="pathway name" value="Transcriptional regulation by small RNAs"/>
</dbReference>
<dbReference type="Reactome" id="R-BTA-5625886">
    <property type="pathway name" value="Activated PKN1 stimulates transcription of AR (androgen receptor) regulated genes KLK2 and KLK3"/>
</dbReference>
<dbReference type="Reactome" id="R-BTA-5693565">
    <property type="pathway name" value="Recruitment and ATM-mediated phosphorylation of repair and signaling proteins at DNA double strand breaks"/>
</dbReference>
<dbReference type="Reactome" id="R-BTA-5693571">
    <property type="pathway name" value="Nonhomologous End-Joining (NHEJ)"/>
</dbReference>
<dbReference type="Reactome" id="R-BTA-5693607">
    <property type="pathway name" value="Processing of DNA double-strand break ends"/>
</dbReference>
<dbReference type="Reactome" id="R-BTA-606279">
    <property type="pathway name" value="Deposition of new CENPA-containing nucleosomes at the centromere"/>
</dbReference>
<dbReference type="Reactome" id="R-BTA-68616">
    <property type="pathway name" value="Assembly of the ORC complex at the origin of replication"/>
</dbReference>
<dbReference type="Reactome" id="R-BTA-69473">
    <property type="pathway name" value="G2/M DNA damage checkpoint"/>
</dbReference>
<dbReference type="Reactome" id="R-BTA-73728">
    <property type="pathway name" value="RNA Polymerase I Promoter Opening"/>
</dbReference>
<dbReference type="Reactome" id="R-BTA-73772">
    <property type="pathway name" value="RNA Polymerase I Promoter Escape"/>
</dbReference>
<dbReference type="Reactome" id="R-BTA-8936459">
    <property type="pathway name" value="RUNX1 regulates genes involved in megakaryocyte differentiation and platelet function"/>
</dbReference>
<dbReference type="Reactome" id="R-BTA-9018519">
    <property type="pathway name" value="Estrogen-dependent gene expression"/>
</dbReference>
<dbReference type="Reactome" id="R-BTA-9670095">
    <property type="pathway name" value="Inhibition of DNA recombination at telomere"/>
</dbReference>
<dbReference type="Reactome" id="R-BTA-9841922">
    <property type="pathway name" value="MLL4 and MLL3 complexes regulate expression of PPARG target genes in adipogenesis and hepatic steatosis"/>
</dbReference>
<dbReference type="Reactome" id="R-BTA-9843940">
    <property type="pathway name" value="Regulation of endogenous retroelements by KRAB-ZFP proteins"/>
</dbReference>
<dbReference type="Reactome" id="R-BTA-9843970">
    <property type="pathway name" value="Regulation of endogenous retroelements by the Human Silencing Hub (HUSH) complex"/>
</dbReference>
<dbReference type="Proteomes" id="UP000009136">
    <property type="component" value="Chromosome 1"/>
</dbReference>
<dbReference type="Proteomes" id="UP000009136">
    <property type="component" value="Chromosome 23"/>
</dbReference>
<dbReference type="Proteomes" id="UP000009136">
    <property type="component" value="Chromosome 3"/>
</dbReference>
<dbReference type="Proteomes" id="UP000009136">
    <property type="component" value="Chromosome 5"/>
</dbReference>
<dbReference type="Bgee" id="ENSBTAG00000040277">
    <property type="expression patterns" value="Expressed in spiral colon and 103 other cell types or tissues"/>
</dbReference>
<dbReference type="GO" id="GO:0005654">
    <property type="term" value="C:nucleoplasm"/>
    <property type="evidence" value="ECO:0000304"/>
    <property type="project" value="Reactome"/>
</dbReference>
<dbReference type="GO" id="GO:0000786">
    <property type="term" value="C:nucleosome"/>
    <property type="evidence" value="ECO:0007669"/>
    <property type="project" value="UniProtKB-KW"/>
</dbReference>
<dbReference type="GO" id="GO:0003677">
    <property type="term" value="F:DNA binding"/>
    <property type="evidence" value="ECO:0000318"/>
    <property type="project" value="GO_Central"/>
</dbReference>
<dbReference type="GO" id="GO:0046982">
    <property type="term" value="F:protein heterodimerization activity"/>
    <property type="evidence" value="ECO:0007669"/>
    <property type="project" value="InterPro"/>
</dbReference>
<dbReference type="GO" id="GO:0030527">
    <property type="term" value="F:structural constituent of chromatin"/>
    <property type="evidence" value="ECO:0007669"/>
    <property type="project" value="InterPro"/>
</dbReference>
<dbReference type="GO" id="GO:0006334">
    <property type="term" value="P:nucleosome assembly"/>
    <property type="evidence" value="ECO:0000318"/>
    <property type="project" value="GO_Central"/>
</dbReference>
<dbReference type="CDD" id="cd22912">
    <property type="entry name" value="HFD_H4"/>
    <property type="match status" value="1"/>
</dbReference>
<dbReference type="FunFam" id="1.10.20.10:FF:000002">
    <property type="entry name" value="Histone H4"/>
    <property type="match status" value="1"/>
</dbReference>
<dbReference type="Gene3D" id="1.10.20.10">
    <property type="entry name" value="Histone, subunit A"/>
    <property type="match status" value="1"/>
</dbReference>
<dbReference type="InterPro" id="IPR035425">
    <property type="entry name" value="CENP-T/H4_C"/>
</dbReference>
<dbReference type="InterPro" id="IPR009072">
    <property type="entry name" value="Histone-fold"/>
</dbReference>
<dbReference type="InterPro" id="IPR001951">
    <property type="entry name" value="Histone_H4"/>
</dbReference>
<dbReference type="InterPro" id="IPR019809">
    <property type="entry name" value="Histone_H4_CS"/>
</dbReference>
<dbReference type="InterPro" id="IPR004823">
    <property type="entry name" value="TAF_TATA-bd_Histone-like_dom"/>
</dbReference>
<dbReference type="PANTHER" id="PTHR10484">
    <property type="entry name" value="HISTONE H4"/>
    <property type="match status" value="1"/>
</dbReference>
<dbReference type="Pfam" id="PF15511">
    <property type="entry name" value="CENP-T_C"/>
    <property type="match status" value="1"/>
</dbReference>
<dbReference type="PRINTS" id="PR00623">
    <property type="entry name" value="HISTONEH4"/>
</dbReference>
<dbReference type="SMART" id="SM00417">
    <property type="entry name" value="H4"/>
    <property type="match status" value="1"/>
</dbReference>
<dbReference type="SMART" id="SM00803">
    <property type="entry name" value="TAF"/>
    <property type="match status" value="1"/>
</dbReference>
<dbReference type="SUPFAM" id="SSF47113">
    <property type="entry name" value="Histone-fold"/>
    <property type="match status" value="1"/>
</dbReference>
<dbReference type="PROSITE" id="PS00047">
    <property type="entry name" value="HISTONE_H4"/>
    <property type="match status" value="1"/>
</dbReference>
<feature type="initiator methionine" description="Removed" evidence="5 6">
    <location>
        <position position="1"/>
    </location>
</feature>
<feature type="chain" id="PRO_0000158289" description="Histone H4">
    <location>
        <begin position="2"/>
        <end position="103"/>
    </location>
</feature>
<feature type="DNA-binding region">
    <location>
        <begin position="17"/>
        <end position="21"/>
    </location>
</feature>
<feature type="region of interest" description="Disordered" evidence="4">
    <location>
        <begin position="1"/>
        <end position="20"/>
    </location>
</feature>
<feature type="compositionally biased region" description="Gly residues" evidence="4">
    <location>
        <begin position="1"/>
        <end position="14"/>
    </location>
</feature>
<feature type="modified residue" description="N-acetylserine" evidence="5">
    <location>
        <position position="2"/>
    </location>
</feature>
<feature type="modified residue" description="Phosphoserine" evidence="2">
    <location>
        <position position="2"/>
    </location>
</feature>
<feature type="modified residue" description="Asymmetric dimethylarginine; by PRMT1; alternate" evidence="2">
    <location>
        <position position="4"/>
    </location>
</feature>
<feature type="modified residue" description="Citrulline; alternate" evidence="1">
    <location>
        <position position="4"/>
    </location>
</feature>
<feature type="modified residue" description="Omega-N-methylarginine; by PRMT1; alternate" evidence="2">
    <location>
        <position position="4"/>
    </location>
</feature>
<feature type="modified residue" description="Symmetric dimethylarginine; by PRMT5 and PRMT7; alternate" evidence="3">
    <location>
        <position position="4"/>
    </location>
</feature>
<feature type="modified residue" description="N6-(2-hydroxyisobutyryl)lysine; alternate" evidence="2">
    <location>
        <position position="6"/>
    </location>
</feature>
<feature type="modified residue" description="N6-acetyl-N6-methyllysine; alternate" evidence="2">
    <location>
        <position position="6"/>
    </location>
</feature>
<feature type="modified residue" description="N6-acetyllysine; alternate" evidence="2">
    <location>
        <position position="6"/>
    </location>
</feature>
<feature type="modified residue" description="N6-butyryllysine; alternate" evidence="2">
    <location>
        <position position="6"/>
    </location>
</feature>
<feature type="modified residue" description="N6-crotonyllysine; alternate" evidence="2">
    <location>
        <position position="6"/>
    </location>
</feature>
<feature type="modified residue" description="N6-glutaryllysine; alternate" evidence="2">
    <location>
        <position position="6"/>
    </location>
</feature>
<feature type="modified residue" description="N6-lactoyllysine; alternate" evidence="2">
    <location>
        <position position="6"/>
    </location>
</feature>
<feature type="modified residue" description="N6-(2-hydroxyisobutyryl)lysine; alternate" evidence="2">
    <location>
        <position position="9"/>
    </location>
</feature>
<feature type="modified residue" description="N6-(beta-hydroxybutyryl)lysine; alternate" evidence="3">
    <location>
        <position position="9"/>
    </location>
</feature>
<feature type="modified residue" description="N6-acetyllysine; alternate" evidence="2">
    <location>
        <position position="9"/>
    </location>
</feature>
<feature type="modified residue" description="N6-butyryllysine; alternate" evidence="2">
    <location>
        <position position="9"/>
    </location>
</feature>
<feature type="modified residue" description="N6-crotonyllysine; alternate" evidence="2">
    <location>
        <position position="9"/>
    </location>
</feature>
<feature type="modified residue" description="N6-lactoyllysine; alternate" evidence="2">
    <location>
        <position position="9"/>
    </location>
</feature>
<feature type="modified residue" description="N6-propionyllysine; alternate" evidence="2">
    <location>
        <position position="9"/>
    </location>
</feature>
<feature type="modified residue" description="N6-(2-hydroxyisobutyryl)lysine; alternate" evidence="2">
    <location>
        <position position="13"/>
    </location>
</feature>
<feature type="modified residue" description="N6-(beta-hydroxybutyryl)lysine; alternate" evidence="3">
    <location>
        <position position="13"/>
    </location>
</feature>
<feature type="modified residue" description="N6-acetyl-N6-methyllysine; alternate" evidence="2">
    <location>
        <position position="13"/>
    </location>
</feature>
<feature type="modified residue" description="N6-acetyllysine; alternate" evidence="2">
    <location>
        <position position="13"/>
    </location>
</feature>
<feature type="modified residue" description="N6-butyryllysine; alternate" evidence="2">
    <location>
        <position position="13"/>
    </location>
</feature>
<feature type="modified residue" description="N6-crotonyllysine; alternate" evidence="2">
    <location>
        <position position="13"/>
    </location>
</feature>
<feature type="modified residue" description="N6-glutaryllysine; alternate" evidence="2">
    <location>
        <position position="13"/>
    </location>
</feature>
<feature type="modified residue" description="N6-lactoyllysine; alternate" evidence="2">
    <location>
        <position position="13"/>
    </location>
</feature>
<feature type="modified residue" description="N6-methyllysine; alternate" evidence="2">
    <location>
        <position position="13"/>
    </location>
</feature>
<feature type="modified residue" description="N6-succinyllysine; alternate" evidence="2">
    <location>
        <position position="13"/>
    </location>
</feature>
<feature type="modified residue" description="N6-(2-hydroxyisobutyryl)lysine; alternate" evidence="2">
    <location>
        <position position="17"/>
    </location>
</feature>
<feature type="modified residue" description="N6-acetyllysine; alternate" evidence="5">
    <location>
        <position position="17"/>
    </location>
</feature>
<feature type="modified residue" description="N6-butyryllysine; alternate" evidence="2">
    <location>
        <position position="17"/>
    </location>
</feature>
<feature type="modified residue" description="N6-crotonyllysine; alternate" evidence="2">
    <location>
        <position position="17"/>
    </location>
</feature>
<feature type="modified residue" description="N6-lactoyllysine; alternate" evidence="2">
    <location>
        <position position="17"/>
    </location>
</feature>
<feature type="modified residue" description="N6-propionyllysine; alternate" evidence="2">
    <location>
        <position position="17"/>
    </location>
</feature>
<feature type="modified residue" description="N6,N6,N6-trimethyllysine; alternate" evidence="2">
    <location>
        <position position="21"/>
    </location>
</feature>
<feature type="modified residue" description="N6,N6-dimethyllysine; alternate" evidence="5">
    <location>
        <position position="21"/>
    </location>
</feature>
<feature type="modified residue" description="N6-methyllysine; alternate" evidence="5">
    <location>
        <position position="21"/>
    </location>
</feature>
<feature type="modified residue" description="N6-(2-hydroxyisobutyryl)lysine; alternate" evidence="2">
    <location>
        <position position="32"/>
    </location>
</feature>
<feature type="modified residue" description="N6-acetyllysine; alternate" evidence="2">
    <location>
        <position position="32"/>
    </location>
</feature>
<feature type="modified residue" description="N6-butyryllysine; alternate" evidence="2">
    <location>
        <position position="32"/>
    </location>
</feature>
<feature type="modified residue" description="N6-glutaryllysine; alternate" evidence="2">
    <location>
        <position position="32"/>
    </location>
</feature>
<feature type="modified residue" description="N6-lactoyllysine; alternate" evidence="2">
    <location>
        <position position="32"/>
    </location>
</feature>
<feature type="modified residue" description="N6-propionyllysine; alternate" evidence="2">
    <location>
        <position position="32"/>
    </location>
</feature>
<feature type="modified residue" description="N6-succinyllysine; alternate" evidence="2">
    <location>
        <position position="32"/>
    </location>
</feature>
<feature type="modified residue" description="N6-(2-hydroxyisobutyryl)lysine; alternate" evidence="2">
    <location>
        <position position="45"/>
    </location>
</feature>
<feature type="modified residue" description="N6-butyryllysine; alternate" evidence="2">
    <location>
        <position position="45"/>
    </location>
</feature>
<feature type="modified residue" description="N6-propionyllysine; alternate" evidence="2">
    <location>
        <position position="45"/>
    </location>
</feature>
<feature type="modified residue" description="Phosphoserine; by PAK2" evidence="2">
    <location>
        <position position="48"/>
    </location>
</feature>
<feature type="modified residue" description="Phosphotyrosine" evidence="2">
    <location>
        <position position="52"/>
    </location>
</feature>
<feature type="modified residue" description="N6-(2-hydroxyisobutyryl)lysine; alternate" evidence="2">
    <location>
        <position position="60"/>
    </location>
</feature>
<feature type="modified residue" description="N6-glutaryllysine; alternate" evidence="2">
    <location>
        <position position="60"/>
    </location>
</feature>
<feature type="modified residue" description="N6-(2-hydroxyisobutyryl)lysine; alternate" evidence="2">
    <location>
        <position position="78"/>
    </location>
</feature>
<feature type="modified residue" description="N6-butyryllysine; alternate" evidence="2">
    <location>
        <position position="78"/>
    </location>
</feature>
<feature type="modified residue" description="N6-glutaryllysine; alternate" evidence="2">
    <location>
        <position position="78"/>
    </location>
</feature>
<feature type="modified residue" description="N6-lactoyllysine; alternate" evidence="2">
    <location>
        <position position="78"/>
    </location>
</feature>
<feature type="modified residue" description="N6-propionyllysine; alternate" evidence="2">
    <location>
        <position position="78"/>
    </location>
</feature>
<feature type="modified residue" description="N6-succinyllysine; alternate" evidence="2">
    <location>
        <position position="78"/>
    </location>
</feature>
<feature type="modified residue" description="N6-(2-hydroxyisobutyryl)lysine; alternate" evidence="2">
    <location>
        <position position="80"/>
    </location>
</feature>
<feature type="modified residue" description="N6-butyryllysine; alternate" evidence="2">
    <location>
        <position position="80"/>
    </location>
</feature>
<feature type="modified residue" description="N6-glutaryllysine; alternate" evidence="2">
    <location>
        <position position="80"/>
    </location>
</feature>
<feature type="modified residue" description="N6-propionyllysine; alternate" evidence="2">
    <location>
        <position position="80"/>
    </location>
</feature>
<feature type="modified residue" description="N6-succinyllysine; alternate" evidence="3">
    <location>
        <position position="80"/>
    </location>
</feature>
<feature type="modified residue" description="Phosphothreonine" evidence="3">
    <location>
        <position position="81"/>
    </location>
</feature>
<feature type="modified residue" description="Phosphotyrosine" evidence="2">
    <location>
        <position position="89"/>
    </location>
</feature>
<feature type="modified residue" description="N6-(2-hydroxyisobutyryl)lysine; alternate" evidence="2">
    <location>
        <position position="92"/>
    </location>
</feature>
<feature type="modified residue" description="N6-acetyllysine; alternate" evidence="2">
    <location>
        <position position="92"/>
    </location>
</feature>
<feature type="modified residue" description="N6-butyryllysine; alternate" evidence="2">
    <location>
        <position position="92"/>
    </location>
</feature>
<feature type="modified residue" description="N6-glutaryllysine; alternate" evidence="2">
    <location>
        <position position="92"/>
    </location>
</feature>
<feature type="modified residue" description="N6-lactoyllysine; alternate" evidence="2">
    <location>
        <position position="92"/>
    </location>
</feature>
<feature type="modified residue" description="N6-propionyllysine; alternate" evidence="2">
    <location>
        <position position="92"/>
    </location>
</feature>
<feature type="modified residue" description="N6-succinyllysine; alternate" evidence="2">
    <location>
        <position position="92"/>
    </location>
</feature>
<feature type="cross-link" description="Glycyl lysine isopeptide (Lys-Gly) (interchain with G-Cter in SUMO2); alternate" evidence="2">
    <location>
        <position position="13"/>
    </location>
</feature>
<feature type="cross-link" description="Glycyl lysine isopeptide (Lys-Gly) (interchain with G-Cter in SUMO2); alternate" evidence="2">
    <location>
        <position position="21"/>
    </location>
</feature>
<feature type="cross-link" description="Glycyl lysine isopeptide (Lys-Gly) (interchain with G-Cter in SUMO2); alternate" evidence="2">
    <location>
        <position position="32"/>
    </location>
</feature>
<feature type="cross-link" description="Glycyl lysine isopeptide (Lys-Gly) (interchain with G-Cter in UFM1); alternate" evidence="2">
    <location>
        <position position="32"/>
    </location>
</feature>
<feature type="cross-link" description="Glycyl lysine isopeptide (Lys-Gly) (interchain with G-Cter in SUMO2); alternate" evidence="2">
    <location>
        <position position="60"/>
    </location>
</feature>
<feature type="cross-link" description="Glycyl lysine isopeptide (Lys-Gly) (interchain with G-Cter in SUMO2); alternate" evidence="2">
    <location>
        <position position="80"/>
    </location>
</feature>
<feature type="cross-link" description="Glycyl lysine isopeptide (Lys-Gly) (interchain with G-Cter in SUMO2); alternate" evidence="2">
    <location>
        <position position="92"/>
    </location>
</feature>
<feature type="cross-link" description="Glycyl lysine isopeptide (Lys-Gly) (interchain with G-Cter in ubiquitin); alternate" evidence="2">
    <location>
        <position position="92"/>
    </location>
</feature>
<feature type="sequence conflict" description="In Ref. 2; AAI42000." evidence="7" ref="2">
    <original>T</original>
    <variation>A</variation>
    <location>
        <position position="55"/>
    </location>
</feature>
<sequence length="103" mass="11367">MSGRGKGGKGLGKGGAKRHRKVLRDNIQGITKPAIRRLARRGGVKRISGLIYEETRGVLKVFLENVIRDAVTYTEHAKRKTVTAMDVVYALKRQGRTLYGFGG</sequence>
<accession>P62803</accession>
<accession>A5PJ80</accession>
<accession>A5PK53</accession>
<accession>A8QFF4</accession>
<accession>P02304</accession>
<accession>P02305</accession>